<organism>
    <name type="scientific">Helicobacter pylori (strain J99 / ATCC 700824)</name>
    <name type="common">Campylobacter pylori J99</name>
    <dbReference type="NCBI Taxonomy" id="85963"/>
    <lineage>
        <taxon>Bacteria</taxon>
        <taxon>Pseudomonadati</taxon>
        <taxon>Campylobacterota</taxon>
        <taxon>Epsilonproteobacteria</taxon>
        <taxon>Campylobacterales</taxon>
        <taxon>Helicobacteraceae</taxon>
        <taxon>Helicobacter</taxon>
    </lineage>
</organism>
<gene>
    <name evidence="1" type="primary">hldE</name>
    <name type="synonym">rfaE</name>
    <name type="synonym">waaE</name>
    <name type="ordered locus">jhp_0792</name>
</gene>
<dbReference type="EC" id="2.7.1.167" evidence="1"/>
<dbReference type="EC" id="2.7.7.70" evidence="1"/>
<dbReference type="EMBL" id="AE001439">
    <property type="protein sequence ID" value="AAD06368.1"/>
    <property type="molecule type" value="Genomic_DNA"/>
</dbReference>
<dbReference type="PIR" id="C71887">
    <property type="entry name" value="C71887"/>
</dbReference>
<dbReference type="RefSeq" id="WP_000723040.1">
    <property type="nucleotide sequence ID" value="NC_000921.1"/>
</dbReference>
<dbReference type="SMR" id="Q9ZKZ0"/>
<dbReference type="KEGG" id="hpj:jhp_0792"/>
<dbReference type="PATRIC" id="fig|85963.30.peg.180"/>
<dbReference type="eggNOG" id="COG0615">
    <property type="taxonomic scope" value="Bacteria"/>
</dbReference>
<dbReference type="eggNOG" id="COG2870">
    <property type="taxonomic scope" value="Bacteria"/>
</dbReference>
<dbReference type="UniPathway" id="UPA00356">
    <property type="reaction ID" value="UER00437"/>
</dbReference>
<dbReference type="UniPathway" id="UPA00356">
    <property type="reaction ID" value="UER00439"/>
</dbReference>
<dbReference type="UniPathway" id="UPA00958"/>
<dbReference type="Proteomes" id="UP000000804">
    <property type="component" value="Chromosome"/>
</dbReference>
<dbReference type="GO" id="GO:0005829">
    <property type="term" value="C:cytosol"/>
    <property type="evidence" value="ECO:0007669"/>
    <property type="project" value="TreeGrafter"/>
</dbReference>
<dbReference type="GO" id="GO:0005524">
    <property type="term" value="F:ATP binding"/>
    <property type="evidence" value="ECO:0007669"/>
    <property type="project" value="UniProtKB-UniRule"/>
</dbReference>
<dbReference type="GO" id="GO:0033785">
    <property type="term" value="F:heptose 7-phosphate kinase activity"/>
    <property type="evidence" value="ECO:0007669"/>
    <property type="project" value="UniProtKB-UniRule"/>
</dbReference>
<dbReference type="GO" id="GO:0033786">
    <property type="term" value="F:heptose-1-phosphate adenylyltransferase activity"/>
    <property type="evidence" value="ECO:0007669"/>
    <property type="project" value="UniProtKB-UniRule"/>
</dbReference>
<dbReference type="GO" id="GO:0016773">
    <property type="term" value="F:phosphotransferase activity, alcohol group as acceptor"/>
    <property type="evidence" value="ECO:0007669"/>
    <property type="project" value="InterPro"/>
</dbReference>
<dbReference type="GO" id="GO:0097171">
    <property type="term" value="P:ADP-L-glycero-beta-D-manno-heptose biosynthetic process"/>
    <property type="evidence" value="ECO:0007669"/>
    <property type="project" value="UniProtKB-UniPathway"/>
</dbReference>
<dbReference type="GO" id="GO:0009244">
    <property type="term" value="P:lipopolysaccharide core region biosynthetic process"/>
    <property type="evidence" value="ECO:0007669"/>
    <property type="project" value="UniProtKB-UniPathway"/>
</dbReference>
<dbReference type="CDD" id="cd01172">
    <property type="entry name" value="RfaE_like"/>
    <property type="match status" value="1"/>
</dbReference>
<dbReference type="Gene3D" id="3.40.1190.20">
    <property type="match status" value="1"/>
</dbReference>
<dbReference type="Gene3D" id="3.40.50.620">
    <property type="entry name" value="HUPs"/>
    <property type="match status" value="1"/>
</dbReference>
<dbReference type="HAMAP" id="MF_01603">
    <property type="entry name" value="HldE"/>
    <property type="match status" value="1"/>
</dbReference>
<dbReference type="InterPro" id="IPR023030">
    <property type="entry name" value="Bifunc_HldE"/>
</dbReference>
<dbReference type="InterPro" id="IPR004821">
    <property type="entry name" value="Cyt_trans-like"/>
</dbReference>
<dbReference type="InterPro" id="IPR011611">
    <property type="entry name" value="PfkB_dom"/>
</dbReference>
<dbReference type="InterPro" id="IPR011913">
    <property type="entry name" value="RfaE_dom_I"/>
</dbReference>
<dbReference type="InterPro" id="IPR011914">
    <property type="entry name" value="RfaE_dom_II"/>
</dbReference>
<dbReference type="InterPro" id="IPR029056">
    <property type="entry name" value="Ribokinase-like"/>
</dbReference>
<dbReference type="InterPro" id="IPR014729">
    <property type="entry name" value="Rossmann-like_a/b/a_fold"/>
</dbReference>
<dbReference type="NCBIfam" id="TIGR00125">
    <property type="entry name" value="cyt_tran_rel"/>
    <property type="match status" value="1"/>
</dbReference>
<dbReference type="NCBIfam" id="TIGR02198">
    <property type="entry name" value="rfaE_dom_I"/>
    <property type="match status" value="1"/>
</dbReference>
<dbReference type="NCBIfam" id="TIGR02199">
    <property type="entry name" value="rfaE_dom_II"/>
    <property type="match status" value="1"/>
</dbReference>
<dbReference type="PANTHER" id="PTHR46969">
    <property type="entry name" value="BIFUNCTIONAL PROTEIN HLDE"/>
    <property type="match status" value="1"/>
</dbReference>
<dbReference type="PANTHER" id="PTHR46969:SF1">
    <property type="entry name" value="BIFUNCTIONAL PROTEIN HLDE"/>
    <property type="match status" value="1"/>
</dbReference>
<dbReference type="Pfam" id="PF01467">
    <property type="entry name" value="CTP_transf_like"/>
    <property type="match status" value="1"/>
</dbReference>
<dbReference type="Pfam" id="PF00294">
    <property type="entry name" value="PfkB"/>
    <property type="match status" value="1"/>
</dbReference>
<dbReference type="SUPFAM" id="SSF52374">
    <property type="entry name" value="Nucleotidylyl transferase"/>
    <property type="match status" value="1"/>
</dbReference>
<dbReference type="SUPFAM" id="SSF53613">
    <property type="entry name" value="Ribokinase-like"/>
    <property type="match status" value="1"/>
</dbReference>
<proteinExistence type="inferred from homology"/>
<comment type="function">
    <text evidence="1">Catalyzes the phosphorylation of D-glycero-D-manno-heptose 7-phosphate at the C-1 position to selectively form D-glycero-beta-D-manno-heptose-1,7-bisphosphate.</text>
</comment>
<comment type="function">
    <text evidence="1">Catalyzes the ADP transfer from ATP to D-glycero-beta-D-manno-heptose 1-phosphate, yielding ADP-D-glycero-beta-D-manno-heptose.</text>
</comment>
<comment type="catalytic activity">
    <reaction evidence="1">
        <text>D-glycero-beta-D-manno-heptose 7-phosphate + ATP = D-glycero-beta-D-manno-heptose 1,7-bisphosphate + ADP + H(+)</text>
        <dbReference type="Rhea" id="RHEA:27473"/>
        <dbReference type="ChEBI" id="CHEBI:15378"/>
        <dbReference type="ChEBI" id="CHEBI:30616"/>
        <dbReference type="ChEBI" id="CHEBI:60204"/>
        <dbReference type="ChEBI" id="CHEBI:60208"/>
        <dbReference type="ChEBI" id="CHEBI:456216"/>
        <dbReference type="EC" id="2.7.1.167"/>
    </reaction>
</comment>
<comment type="catalytic activity">
    <reaction evidence="1">
        <text>D-glycero-beta-D-manno-heptose 1-phosphate + ATP + H(+) = ADP-D-glycero-beta-D-manno-heptose + diphosphate</text>
        <dbReference type="Rhea" id="RHEA:27465"/>
        <dbReference type="ChEBI" id="CHEBI:15378"/>
        <dbReference type="ChEBI" id="CHEBI:30616"/>
        <dbReference type="ChEBI" id="CHEBI:33019"/>
        <dbReference type="ChEBI" id="CHEBI:59967"/>
        <dbReference type="ChEBI" id="CHEBI:61593"/>
        <dbReference type="EC" id="2.7.7.70"/>
    </reaction>
</comment>
<comment type="pathway">
    <text evidence="1">Nucleotide-sugar biosynthesis; ADP-L-glycero-beta-D-manno-heptose biosynthesis; ADP-L-glycero-beta-D-manno-heptose from D-glycero-beta-D-manno-heptose 7-phosphate: step 1/4.</text>
</comment>
<comment type="pathway">
    <text evidence="1">Nucleotide-sugar biosynthesis; ADP-L-glycero-beta-D-manno-heptose biosynthesis; ADP-L-glycero-beta-D-manno-heptose from D-glycero-beta-D-manno-heptose 7-phosphate: step 3/4.</text>
</comment>
<comment type="pathway">
    <text>Bacterial outer membrane biogenesis; LPS core biosynthesis.</text>
</comment>
<comment type="subunit">
    <text evidence="1">Homodimer.</text>
</comment>
<comment type="similarity">
    <text evidence="1">In the N-terminal section; belongs to the carbohydrate kinase PfkB family.</text>
</comment>
<comment type="similarity">
    <text evidence="1">In the C-terminal section; belongs to the cytidylyltransferase family.</text>
</comment>
<reference key="1">
    <citation type="journal article" date="1999" name="Nature">
        <title>Genomic sequence comparison of two unrelated isolates of the human gastric pathogen Helicobacter pylori.</title>
        <authorList>
            <person name="Alm R.A."/>
            <person name="Ling L.-S.L."/>
            <person name="Moir D.T."/>
            <person name="King B.L."/>
            <person name="Brown E.D."/>
            <person name="Doig P.C."/>
            <person name="Smith D.R."/>
            <person name="Noonan B."/>
            <person name="Guild B.C."/>
            <person name="deJonge B.L."/>
            <person name="Carmel G."/>
            <person name="Tummino P.J."/>
            <person name="Caruso A."/>
            <person name="Uria-Nickelsen M."/>
            <person name="Mills D.M."/>
            <person name="Ives C."/>
            <person name="Gibson R."/>
            <person name="Merberg D."/>
            <person name="Mills S.D."/>
            <person name="Jiang Q."/>
            <person name="Taylor D.E."/>
            <person name="Vovis G.F."/>
            <person name="Trust T.J."/>
        </authorList>
    </citation>
    <scope>NUCLEOTIDE SEQUENCE [LARGE SCALE GENOMIC DNA]</scope>
    <source>
        <strain>J99 / ATCC 700824</strain>
    </source>
</reference>
<sequence>MKKILVIGDLIADYYLWGKSERLSPEAPVPVLEVKKESKNLGGAANVANNLTSLKAKVFLCGVVGDDLEGKHFISTLKTRGIDTSGVLIDKTRCTTLKTRIIAQNQQIVRVDKEIKDPLNADLRKNLLDFIAEKIQEIDGVILSDYNKGVLDFELTQTIITLANKHHKLILCDPKGKDYSKYSHASLITPNRAELEQALHLKLDSHANLSKALQILQETYHIAMPLVTLSEQGIAFLEKGELVNCPTIAKEVYDVTGAGDTVIASLTLSLLESKSLKEACEFANAAAAVVVGKMGSALASLEEIALILNQTHPKILPLEKLLETLERNQQKIVFTNGCFDILHKGHASYLQKAKALGDILVVGLNSDNSIKRLKGDKRPIVSEKDRAFLLASLSCVDYVVVFGEDTPIKLIQALKPDILVKGADYLNKEVIGSELAKETRLIEFEEGYSTSAIIEKIKRTHND</sequence>
<name>HLDE_HELPJ</name>
<feature type="chain" id="PRO_0000080114" description="Bifunctional protein HldE">
    <location>
        <begin position="1"/>
        <end position="463"/>
    </location>
</feature>
<feature type="region of interest" description="Ribokinase">
    <location>
        <begin position="1"/>
        <end position="315"/>
    </location>
</feature>
<feature type="region of interest" description="Cytidylyltransferase">
    <location>
        <begin position="334"/>
        <end position="463"/>
    </location>
</feature>
<feature type="active site" evidence="1">
    <location>
        <position position="260"/>
    </location>
</feature>
<feature type="binding site" evidence="1">
    <location>
        <begin position="191"/>
        <end position="194"/>
    </location>
    <ligand>
        <name>ATP</name>
        <dbReference type="ChEBI" id="CHEBI:30616"/>
    </ligand>
</feature>
<keyword id="KW-0067">ATP-binding</keyword>
<keyword id="KW-0119">Carbohydrate metabolism</keyword>
<keyword id="KW-0418">Kinase</keyword>
<keyword id="KW-0448">Lipopolysaccharide biosynthesis</keyword>
<keyword id="KW-0511">Multifunctional enzyme</keyword>
<keyword id="KW-0547">Nucleotide-binding</keyword>
<keyword id="KW-0548">Nucleotidyltransferase</keyword>
<keyword id="KW-0808">Transferase</keyword>
<accession>Q9ZKZ0</accession>
<protein>
    <recommendedName>
        <fullName evidence="1">Bifunctional protein HldE</fullName>
    </recommendedName>
    <domain>
        <recommendedName>
            <fullName evidence="1">D-beta-D-heptose 7-phosphate kinase</fullName>
            <ecNumber evidence="1">2.7.1.167</ecNumber>
        </recommendedName>
        <alternativeName>
            <fullName evidence="1">D-beta-D-heptose 7-phosphotransferase</fullName>
        </alternativeName>
        <alternativeName>
            <fullName evidence="1">D-glycero-beta-D-manno-heptose-7-phosphate kinase</fullName>
        </alternativeName>
    </domain>
    <domain>
        <recommendedName>
            <fullName evidence="1">D-beta-D-heptose 1-phosphate adenylyltransferase</fullName>
            <ecNumber evidence="1">2.7.7.70</ecNumber>
        </recommendedName>
        <alternativeName>
            <fullName evidence="1">D-glycero-beta-D-manno-heptose 1-phosphate adenylyltransferase</fullName>
        </alternativeName>
    </domain>
</protein>
<evidence type="ECO:0000255" key="1">
    <source>
        <dbReference type="HAMAP-Rule" id="MF_01603"/>
    </source>
</evidence>